<keyword id="KW-0025">Alternative splicing</keyword>
<keyword id="KW-0175">Coiled coil</keyword>
<keyword id="KW-0968">Cytoplasmic vesicle</keyword>
<keyword id="KW-0209">Deafness</keyword>
<keyword id="KW-0219">Diabetes mellitus</keyword>
<keyword id="KW-0903">Direct protein sequencing</keyword>
<keyword id="KW-0225">Disease variant</keyword>
<keyword id="KW-0887">Epilepsy</keyword>
<keyword id="KW-1016">Hypogonadotropic hypogonadism</keyword>
<keyword id="KW-0472">Membrane</keyword>
<keyword id="KW-0622">Neuropathy</keyword>
<keyword id="KW-1010">Non-syndromic deafness</keyword>
<keyword id="KW-0597">Phosphoprotein</keyword>
<keyword id="KW-1267">Proteomics identification</keyword>
<keyword id="KW-1185">Reference proteome</keyword>
<keyword id="KW-0677">Repeat</keyword>
<keyword id="KW-0770">Synapse</keyword>
<keyword id="KW-0853">WD repeat</keyword>
<sequence>MHLHQVLTGAVNPGDNCYSVGSVGDVPFTAYGSGCDIVILANDFECVQIIPGAKHGNIQVSCVECSNQQGRIAASYGNAVCIFEPLGINSHKRNCQLKCQWLKTGQFFLSSVTYNLAWDPQDNRLLTATDSIQLWAPPGDDILEEEEEIDNTVPPVLNDWKCVWQCKTSVSVHLMEWSPDGEYFATAGKDDCLLKVWYPMTGWKSSIIPQDHHEVKRRQSSTQFSFVYLAHPRAVTGFSWRKTSKYMPRGSVCNVLLTSCHDGVCRLWAETLLPEDCLLGEQICETTTSSIASSLSHAGRHKDRIQHALETIHHLKNLRKGQRRSSVLVTHAELMPDQTAMHEVQRHISHHANALCHFHIAASINPATDIPNVLVGTAFNVDDGNGGFVVHWLNNKEFHFTSSTEVFMHQLRKLSDKQVDHENDDADREDEEHSQEDRERGLHMKLDHDLSLDRESEAGTGSSEHEDGEREGSPRTYSRLSVPMPLPTVLLDRKIETLLTEWNKNPDMLFTIHPVDGTFLVWHVKYLDEYNPGIFRQVQVSFSSRIPVAFPSGDASSLSKNIMMYACINATKDSHHTLLHQEGMSVGSPHGSQPHSRSHSTHMNILAPTVMMISKHIDGSLNQWAVTFADKSAFTTVLTVSHKFRYCGHRFHLNDLACHSVLPLLLTSSHHNALLTPELDCQWDSDNKLSRLMDPVKHIKGSSKQPLRNAATRTFHDPNAIYSELILWRVDPIGPLSYTGGVSELARINSLHTSAFSNVAWLPTLIPSYCLGTYCNSASACFVASDGKNLRLYQAVVDARKLLDELSDPESSKLIGEVFNIVSQQSTARPGCIIELDAITNQCGSNTQLLHVFQEDFIIGYKPHKEDMEKKETEIFFQPSQGYRPPPFSEKFFLVVIEKDSNNNSILHMWHLHLKSVQACLAKASEGASSESLLSVPGQKNVDSSPETSPSVSPMPHSSSIANLQTASKLILSSRLVYSQPLDLPESVEVIRATPSAGHLSSSSIYPVCLAPYLVVTTCSDNKVRFWKCCMEANPECNKSDEKEIYHWKRWPLMNDEGEDNSSTVSIVGRPVAVSCSYTGRLAVAYKQPIHHNGFVSKEFSMHVCIFECESTGGSEWVLEQTIHLDDLVKVGSVLDSRVSVDSNLFVYSKSDALLSKDRYLIPNIKHLVHLDWVSKEDGSHILTVGVGANIFMYGRLSGIVTEQTNSKDGVAVITLPLGGSIKQGVKSRWVLLRSIDLVSSVDGTPSLPVSLSWVRDGILVVGMDCEMHVYAQWKHAVKFGDTEADSSNAEEAAMQDHSTFKSNMLARKSVVEGTAISDDVFCSPTVIQDGGLFEAAHVLSPTLPQYHPTQLLELMDLGKVRRAKAILSHLVKCIAGEVAIVRDPDAGEGTKRHLSRTISVSGSTAKETVTVGKDGTRDYTEIDSIPPLPLYALLAADQDTSYRISEESTKIPQSYEDQTVSQPEDQYSELFQIQDIPTDDIDLEPEKRENKSKVINLSQYGPAYFGQEHARVLSSHLMHSSLPGLTRLEQMFLVALADTVATTSTELDESRDKSCSGRDTLDECGLRYLLAMRLHTCLLTSLPPLYRVQLLHQGVSTCHFAWAFHSEAEEELINMIPAIQRGDPQWSELRAMGIGWWVRNINTLRRCIEKVAKASFQRNNDALDAALFYLSMKKKAVVWGLFRSQHDEKMTTFFSHNFNEDRWRKAALKNAFSLLGKQRFEQSAAFFLLAGSLKDAIEVCLEKMEDIQLAMVIARLYESEFETSSTYISILNQKILGCQKDGSGFSCKRLHPDPFLRSLAYWVMKDYTRALDTLLEQTPKEDDEHQVIIKSCNPVAFSFYNYLRTHPLLIRRNLASPEGTLATLGLKTEKNFVDKINLIERKLFFTTANAHFKVGCPVLALEVLSKIPKVTKTSALSAKKDQPDFISHRMDDVPSHSKALSDGNGSSGIEWSNVTSSQYDWSQPIVKVDEEPLNLDWGEDHDSALDEEEDDAVGLVMKSTDAREKDKQSDQKASDPNMLLTPQEEDDPEGDTEVDVIAEQLKFRACLKILMTELRTLATGYEVDGGKLRFQLYNWLEKEIAALHEICNHESVIKEYSSKTYSKVESDLLDQEEMVDKPDIGSYERHQIERRRLQAKREHAERRKSWLQKNQDLLRVFLSYCSLHGAQGGGLASVRMELKFLLQESQQETTVKQLQSPLPLPTTLPLLSASIASTKTVIANPVLYLNNHIHDILYTIVQMKTPPHPSIEDVKVHTLHSLAASLSASIYQALCDSHSYSQTEGNQFTGMAYQGLLLSDRRRLRTESIEEHATPNSSPAQWPGVSSLINLLSSAQDEDQPKLNILLCEAVVAVYLSLLIHALATNSSSELFRLAAHPLNNRMWAAVFGGGVKLVVKPRRQSENISAPPVLSEDIDKHRRRFNMRMLVPGRPVKDATPPPVPAERPSYKEKFIPPELSMWDYFVAKPFLPLSDSGVIYDSDESIHSDEEDDAFFSDTQIQEHQDPNSYSWALLHLTMVKLALHNVKNFFPIAGLEFSELPVTSPLGIAVIKNLENWEQILQEKMDQFEGPPPNYINTYPTDLSVGAGPAILRNKAMLEPENTPFKSRDSSAFPVKRLWHFLVKQEVLQETFIRYIFTKKRKQSEVEADLGYPGGKAKVIHKESDMIMAFSVNKANCNEIVLASTHDVQELDVTSLLACQSYIWIGEEYDRESKSSDDVDYRGSTTTLYQPSATSYSASQVHPPSSLPWLGTGQTSTGASVLMKRNLHNVKRMTSHPVHQYYLTGAQDGSVRMFEWTRPQQLVCFRQAGNARVTRLYFNSQGNKCGVADGEGFLSIWQVNQTASNPKPYMSWQCHSKATSDFAFITSSSLVATSGHSNDNRNVCLWDTLISPGNSLIHGFTCHDHGATVLQYAPKQQLLISGGRKGHVCIFDIRQRQLIHTFQAHDSAIKALALDPYEEYFTTGSAEGNIKVWRLTGHGLIHSFKSEHAKQSIFRNIGAGVMQIDIIQGNRLFSCGADGTLKTRVLPNAFNIPNRILDIL</sequence>
<reference key="1">
    <citation type="journal article" date="2002" name="J. Biol. Chem.">
        <title>Rabconnectin-3, a novel protein that binds both GDP/GTP exchange protein and GTPase-activating protein for Rab3 small G protein family.</title>
        <authorList>
            <person name="Nagano F."/>
            <person name="Kawabe H."/>
            <person name="Nakanishi H."/>
            <person name="Shinohara M."/>
            <person name="Deguchi-Tawarada M."/>
            <person name="Takeuchi M."/>
            <person name="Sasaki T."/>
            <person name="Takai Y."/>
        </authorList>
    </citation>
    <scope>NUCLEOTIDE SEQUENCE [MRNA] (ISOFORM 1)</scope>
    <scope>PROTEIN SEQUENCE OF 526-540; 789-800; 814-829; 924-938; 1790-1795; 2069-2079 AND 2449-2463</scope>
    <scope>FUNCTION</scope>
    <scope>SUBCELLULAR LOCATION</scope>
    <scope>INTERACTION WITH MADD AND RAB3GAP</scope>
</reference>
<reference key="2">
    <citation type="journal article" date="1998" name="DNA Res.">
        <title>Prediction of the coding sequences of unidentified human genes. XII. The complete sequences of 100 new cDNA clones from brain which code for large proteins in vitro.</title>
        <authorList>
            <person name="Nagase T."/>
            <person name="Ishikawa K."/>
            <person name="Suyama M."/>
            <person name="Kikuno R."/>
            <person name="Hirosawa M."/>
            <person name="Miyajima N."/>
            <person name="Tanaka A."/>
            <person name="Kotani H."/>
            <person name="Nomura N."/>
            <person name="Ohara O."/>
        </authorList>
    </citation>
    <scope>NUCLEOTIDE SEQUENCE [LARGE SCALE MRNA] OF 801-3036 (ISOFORM 3)</scope>
    <scope>VARIANT PRO-1288</scope>
    <source>
        <tissue>Brain</tissue>
    </source>
</reference>
<reference key="3">
    <citation type="journal article" date="2002" name="DNA Res.">
        <title>Construction of expression-ready cDNA clones for KIAA genes: manual curation of 330 KIAA cDNA clones.</title>
        <authorList>
            <person name="Nakajima D."/>
            <person name="Okazaki N."/>
            <person name="Yamakawa H."/>
            <person name="Kikuno R."/>
            <person name="Ohara O."/>
            <person name="Nagase T."/>
        </authorList>
    </citation>
    <scope>SEQUENCE REVISION</scope>
</reference>
<reference key="4">
    <citation type="journal article" date="2006" name="Nature">
        <title>Analysis of the DNA sequence and duplication history of human chromosome 15.</title>
        <authorList>
            <person name="Zody M.C."/>
            <person name="Garber M."/>
            <person name="Sharpe T."/>
            <person name="Young S.K."/>
            <person name="Rowen L."/>
            <person name="O'Neill K."/>
            <person name="Whittaker C.A."/>
            <person name="Kamal M."/>
            <person name="Chang J.L."/>
            <person name="Cuomo C.A."/>
            <person name="Dewar K."/>
            <person name="FitzGerald M.G."/>
            <person name="Kodira C.D."/>
            <person name="Madan A."/>
            <person name="Qin S."/>
            <person name="Yang X."/>
            <person name="Abbasi N."/>
            <person name="Abouelleil A."/>
            <person name="Arachchi H.M."/>
            <person name="Baradarani L."/>
            <person name="Birditt B."/>
            <person name="Bloom S."/>
            <person name="Bloom T."/>
            <person name="Borowsky M.L."/>
            <person name="Burke J."/>
            <person name="Butler J."/>
            <person name="Cook A."/>
            <person name="DeArellano K."/>
            <person name="DeCaprio D."/>
            <person name="Dorris L. III"/>
            <person name="Dors M."/>
            <person name="Eichler E.E."/>
            <person name="Engels R."/>
            <person name="Fahey J."/>
            <person name="Fleetwood P."/>
            <person name="Friedman C."/>
            <person name="Gearin G."/>
            <person name="Hall J.L."/>
            <person name="Hensley G."/>
            <person name="Johnson E."/>
            <person name="Jones C."/>
            <person name="Kamat A."/>
            <person name="Kaur A."/>
            <person name="Locke D.P."/>
            <person name="Madan A."/>
            <person name="Munson G."/>
            <person name="Jaffe D.B."/>
            <person name="Lui A."/>
            <person name="Macdonald P."/>
            <person name="Mauceli E."/>
            <person name="Naylor J.W."/>
            <person name="Nesbitt R."/>
            <person name="Nicol R."/>
            <person name="O'Leary S.B."/>
            <person name="Ratcliffe A."/>
            <person name="Rounsley S."/>
            <person name="She X."/>
            <person name="Sneddon K.M.B."/>
            <person name="Stewart S."/>
            <person name="Sougnez C."/>
            <person name="Stone S.M."/>
            <person name="Topham K."/>
            <person name="Vincent D."/>
            <person name="Wang S."/>
            <person name="Zimmer A.R."/>
            <person name="Birren B.W."/>
            <person name="Hood L."/>
            <person name="Lander E.S."/>
            <person name="Nusbaum C."/>
        </authorList>
    </citation>
    <scope>NUCLEOTIDE SEQUENCE [LARGE SCALE GENOMIC DNA]</scope>
</reference>
<reference key="5">
    <citation type="journal article" date="2004" name="Genome Res.">
        <title>The status, quality, and expansion of the NIH full-length cDNA project: the Mammalian Gene Collection (MGC).</title>
        <authorList>
            <consortium name="The MGC Project Team"/>
        </authorList>
    </citation>
    <scope>NUCLEOTIDE SEQUENCE [LARGE SCALE MRNA] (ISOFORMS 2 AND 3)</scope>
    <scope>VARIANTS PRO-1288 AND SER-1698</scope>
    <source>
        <tissue>Brain</tissue>
    </source>
</reference>
<reference key="6">
    <citation type="journal article" date="2004" name="Anal. Chem.">
        <title>Robust phosphoproteomic profiling of tyrosine phosphorylation sites from human T cells using immobilized metal affinity chromatography and tandem mass spectrometry.</title>
        <authorList>
            <person name="Brill L.M."/>
            <person name="Salomon A.R."/>
            <person name="Ficarro S.B."/>
            <person name="Mukherji M."/>
            <person name="Stettler-Gill M."/>
            <person name="Peters E.C."/>
        </authorList>
    </citation>
    <scope>IDENTIFICATION BY MASS SPECTROMETRY [LARGE SCALE ANALYSIS]</scope>
    <source>
        <tissue>Leukemic T-cell</tissue>
    </source>
</reference>
<reference key="7">
    <citation type="journal article" date="2008" name="Mol. Cell">
        <title>Kinase-selective enrichment enables quantitative phosphoproteomics of the kinome across the cell cycle.</title>
        <authorList>
            <person name="Daub H."/>
            <person name="Olsen J.V."/>
            <person name="Bairlein M."/>
            <person name="Gnad F."/>
            <person name="Oppermann F.S."/>
            <person name="Korner R."/>
            <person name="Greff Z."/>
            <person name="Keri G."/>
            <person name="Stemmann O."/>
            <person name="Mann M."/>
        </authorList>
    </citation>
    <scope>PHOSPHORYLATION [LARGE SCALE ANALYSIS] AT SER-1857</scope>
    <scope>IDENTIFICATION BY MASS SPECTROMETRY [LARGE SCALE ANALYSIS]</scope>
    <source>
        <tissue>Cervix carcinoma</tissue>
    </source>
</reference>
<reference key="8">
    <citation type="journal article" date="2008" name="Proc. Natl. Acad. Sci. U.S.A.">
        <title>A quantitative atlas of mitotic phosphorylation.</title>
        <authorList>
            <person name="Dephoure N."/>
            <person name="Zhou C."/>
            <person name="Villen J."/>
            <person name="Beausoleil S.A."/>
            <person name="Bakalarski C.E."/>
            <person name="Elledge S.J."/>
            <person name="Gygi S.P."/>
        </authorList>
    </citation>
    <scope>PHOSPHORYLATION [LARGE SCALE ANALYSIS] AT SER-944; SER-945; SER-1400 AND SER-1857</scope>
    <scope>IDENTIFICATION BY MASS SPECTROMETRY [LARGE SCALE ANALYSIS]</scope>
    <source>
        <tissue>Cervix carcinoma</tissue>
    </source>
</reference>
<reference key="9">
    <citation type="journal article" date="2009" name="Sci. Signal.">
        <title>Quantitative phosphoproteomic analysis of T cell receptor signaling reveals system-wide modulation of protein-protein interactions.</title>
        <authorList>
            <person name="Mayya V."/>
            <person name="Lundgren D.H."/>
            <person name="Hwang S.-I."/>
            <person name="Rezaul K."/>
            <person name="Wu L."/>
            <person name="Eng J.K."/>
            <person name="Rodionov V."/>
            <person name="Han D.K."/>
        </authorList>
    </citation>
    <scope>PHOSPHORYLATION [LARGE SCALE ANALYSIS] AT SER-944; SER-945; SER-1140; SER-1143 AND SER-1984</scope>
    <scope>IDENTIFICATION BY MASS SPECTROMETRY [LARGE SCALE ANALYSIS]</scope>
    <source>
        <tissue>Leukemic T-cell</tissue>
    </source>
</reference>
<reference key="10">
    <citation type="journal article" date="2010" name="Sci. Signal.">
        <title>Quantitative phosphoproteomics reveals widespread full phosphorylation site occupancy during mitosis.</title>
        <authorList>
            <person name="Olsen J.V."/>
            <person name="Vermeulen M."/>
            <person name="Santamaria A."/>
            <person name="Kumar C."/>
            <person name="Miller M.L."/>
            <person name="Jensen L.J."/>
            <person name="Gnad F."/>
            <person name="Cox J."/>
            <person name="Jensen T.S."/>
            <person name="Nigg E.A."/>
            <person name="Brunak S."/>
            <person name="Mann M."/>
        </authorList>
    </citation>
    <scope>PHOSPHORYLATION [LARGE SCALE ANALYSIS] AT SER-1857</scope>
    <scope>IDENTIFICATION BY MASS SPECTROMETRY [LARGE SCALE ANALYSIS]</scope>
    <source>
        <tissue>Cervix carcinoma</tissue>
    </source>
</reference>
<reference key="11">
    <citation type="journal article" date="2013" name="J. Proteome Res.">
        <title>Toward a comprehensive characterization of a human cancer cell phosphoproteome.</title>
        <authorList>
            <person name="Zhou H."/>
            <person name="Di Palma S."/>
            <person name="Preisinger C."/>
            <person name="Peng M."/>
            <person name="Polat A.N."/>
            <person name="Heck A.J."/>
            <person name="Mohammed S."/>
        </authorList>
    </citation>
    <scope>PHOSPHORYLATION [LARGE SCALE ANALYSIS] AT SER-473; SER-1151; SER-1857 AND SER-2399</scope>
    <scope>IDENTIFICATION BY MASS SPECTROMETRY [LARGE SCALE ANALYSIS]</scope>
    <source>
        <tissue>Cervix carcinoma</tissue>
        <tissue>Erythroleukemia</tissue>
    </source>
</reference>
<reference key="12">
    <citation type="journal article" date="2014" name="PLoS Biol.">
        <title>Haploinsufficiency of Dmxl2, encoding a synaptic protein, causes infertility associated with a loss of GnRH neurons in mouse.</title>
        <authorList>
            <person name="Tata B."/>
            <person name="Huijbregts L."/>
            <person name="Jacquier S."/>
            <person name="Csaba Z."/>
            <person name="Genin E."/>
            <person name="Meyer V."/>
            <person name="Leka S."/>
            <person name="Dupont J."/>
            <person name="Charles P."/>
            <person name="Chevenne D."/>
            <person name="Carel J.C."/>
            <person name="Leger J."/>
            <person name="de Roux N."/>
        </authorList>
    </citation>
    <scope>INVOLVEMENT IN PEPNS</scope>
    <scope>VARIANT PEPNS 1942-SER--GLY-1946 DEL</scope>
</reference>
<reference key="13">
    <citation type="journal article" date="2017" name="Genet. Med.">
        <title>A dominant variant in DMXL2 is linked to nonsyndromic hearing loss.</title>
        <authorList>
            <person name="Chen D.Y."/>
            <person name="Liu X.F."/>
            <person name="Lin X.J."/>
            <person name="Zhang D."/>
            <person name="Chai Y.C."/>
            <person name="Yu D.H."/>
            <person name="Sun C.L."/>
            <person name="Wang X.L."/>
            <person name="Zhu W.D."/>
            <person name="Chen Y."/>
            <person name="Sun L.H."/>
            <person name="Wang X.W."/>
            <person name="Shi F.X."/>
            <person name="Huang Z.W."/>
            <person name="Yang T."/>
            <person name="Wu H."/>
        </authorList>
    </citation>
    <scope>INVOLVEMENT IN DFNA71</scope>
    <scope>VARIANT DFNA71 HIS-2417</scope>
</reference>
<reference key="14">
    <citation type="journal article" date="2019" name="Brain">
        <title>Biallelic DMXL2 mutations impair autophagy and cause Ohtahara syndrome with progressive course.</title>
        <authorList>
            <person name="Esposito A."/>
            <person name="Falace A."/>
            <person name="Wagner M."/>
            <person name="Gal M."/>
            <person name="Mei D."/>
            <person name="Conti V."/>
            <person name="Pisano T."/>
            <person name="Aprile D."/>
            <person name="Cerullo M.S."/>
            <person name="De Fusco A."/>
            <person name="Giovedi S."/>
            <person name="Seibt A."/>
            <person name="Magen D."/>
            <person name="Polster T."/>
            <person name="Eran A."/>
            <person name="Stenton S.L."/>
            <person name="Fiorillo C."/>
            <person name="Ravid S."/>
            <person name="Mayatepek E."/>
            <person name="Hafner H."/>
            <person name="Wortmann S."/>
            <person name="Levanon E.Y."/>
            <person name="Marini C."/>
            <person name="Mandel H."/>
            <person name="Benfenati F."/>
            <person name="Distelmaier F."/>
            <person name="Fassio A."/>
            <person name="Guerrini R."/>
        </authorList>
    </citation>
    <scope>INVOLVEMENT IN DEE81</scope>
    <scope>VARIANTS DEE81 1493-SER--LEU-3036 DEL AND VAL-1712</scope>
</reference>
<reference key="15">
    <citation type="journal article" date="2019" name="Genet. Med.">
        <title>Autozygome and high throughput confirmation of disease genes candidacy.</title>
        <authorList>
            <person name="Maddirevula S."/>
            <person name="Alzahrani F."/>
            <person name="Al-Owain M."/>
            <person name="Al Muhaizea M.A."/>
            <person name="Kayyali H.R."/>
            <person name="AlHashem A."/>
            <person name="Rahbeeni Z."/>
            <person name="Al-Otaibi M."/>
            <person name="Alzaidan H.I."/>
            <person name="Balobaid A."/>
            <person name="El Khashab H.Y."/>
            <person name="Bubshait D.K."/>
            <person name="Faden M."/>
            <person name="Yamani S.A."/>
            <person name="Dabbagh O."/>
            <person name="Al-Mureikhi M."/>
            <person name="Jasser A.A."/>
            <person name="Alsaif H.S."/>
            <person name="Alluhaydan I."/>
            <person name="Seidahmed M.Z."/>
            <person name="Alabbasi B.H."/>
            <person name="Almogarri I."/>
            <person name="Kurdi W."/>
            <person name="Akleh H."/>
            <person name="Qari A."/>
            <person name="Al Tala S.M."/>
            <person name="Alhomaidi S."/>
            <person name="Kentab A.Y."/>
            <person name="Salih M.A."/>
            <person name="Chedrawi A."/>
            <person name="Alameer S."/>
            <person name="Tabarki B."/>
            <person name="Shamseldin H.E."/>
            <person name="Patel N."/>
            <person name="Ibrahim N."/>
            <person name="Abdulwahab F."/>
            <person name="Samira M."/>
            <person name="Goljan E."/>
            <person name="Abouelhoda M."/>
            <person name="Meyer B.F."/>
            <person name="Hashem M."/>
            <person name="Shaheen R."/>
            <person name="AlShahwan S."/>
            <person name="Alfadhel M."/>
            <person name="Ben-Omran T."/>
            <person name="Al-Qattan M.M."/>
            <person name="Monies D."/>
            <person name="Alkuraya F.S."/>
        </authorList>
    </citation>
    <scope>INVOLVEMENT IN DEE81</scope>
</reference>
<dbReference type="EMBL" id="AF389880">
    <property type="protein sequence ID" value="AAL93215.1"/>
    <property type="molecule type" value="mRNA"/>
</dbReference>
<dbReference type="EMBL" id="AB020663">
    <property type="protein sequence ID" value="BAA74879.2"/>
    <property type="molecule type" value="mRNA"/>
</dbReference>
<dbReference type="EMBL" id="AC020892">
    <property type="status" value="NOT_ANNOTATED_CDS"/>
    <property type="molecule type" value="Genomic_DNA"/>
</dbReference>
<dbReference type="EMBL" id="AC066613">
    <property type="status" value="NOT_ANNOTATED_CDS"/>
    <property type="molecule type" value="Genomic_DNA"/>
</dbReference>
<dbReference type="EMBL" id="BC140781">
    <property type="protein sequence ID" value="AAI40782.1"/>
    <property type="molecule type" value="mRNA"/>
</dbReference>
<dbReference type="EMBL" id="BC144539">
    <property type="protein sequence ID" value="AAI44540.1"/>
    <property type="molecule type" value="mRNA"/>
</dbReference>
<dbReference type="CCDS" id="CCDS10141.1">
    <molecule id="Q8TDJ6-1"/>
</dbReference>
<dbReference type="CCDS" id="CCDS53945.1">
    <molecule id="Q8TDJ6-2"/>
</dbReference>
<dbReference type="CCDS" id="CCDS53946.1">
    <molecule id="Q8TDJ6-3"/>
</dbReference>
<dbReference type="RefSeq" id="NP_001167587.1">
    <molecule id="Q8TDJ6-3"/>
    <property type="nucleotide sequence ID" value="NM_001174116.3"/>
</dbReference>
<dbReference type="RefSeq" id="NP_001167588.1">
    <molecule id="Q8TDJ6-2"/>
    <property type="nucleotide sequence ID" value="NM_001174117.3"/>
</dbReference>
<dbReference type="RefSeq" id="NP_056078.2">
    <molecule id="Q8TDJ6-1"/>
    <property type="nucleotide sequence ID" value="NM_015263.5"/>
</dbReference>
<dbReference type="BioGRID" id="116903">
    <property type="interactions" value="69"/>
</dbReference>
<dbReference type="ComplexPortal" id="CPX-10303">
    <property type="entry name" value="RAVE complex, DMXL2 variant"/>
</dbReference>
<dbReference type="CORUM" id="Q8TDJ6"/>
<dbReference type="FunCoup" id="Q8TDJ6">
    <property type="interactions" value="925"/>
</dbReference>
<dbReference type="IntAct" id="Q8TDJ6">
    <property type="interactions" value="44"/>
</dbReference>
<dbReference type="STRING" id="9606.ENSP00000441858"/>
<dbReference type="TCDB" id="8.A.92.1.13">
    <property type="family name" value="the g-protein AlphaBetaGama complex (gpc) family"/>
</dbReference>
<dbReference type="GlyGen" id="Q8TDJ6">
    <property type="glycosylation" value="3 sites, 1 O-linked glycan (2 sites)"/>
</dbReference>
<dbReference type="iPTMnet" id="Q8TDJ6"/>
<dbReference type="PhosphoSitePlus" id="Q8TDJ6"/>
<dbReference type="SwissPalm" id="Q8TDJ6"/>
<dbReference type="BioMuta" id="DMXL2"/>
<dbReference type="DMDM" id="296434481"/>
<dbReference type="jPOST" id="Q8TDJ6"/>
<dbReference type="MassIVE" id="Q8TDJ6"/>
<dbReference type="PaxDb" id="9606-ENSP00000441858"/>
<dbReference type="PeptideAtlas" id="Q8TDJ6"/>
<dbReference type="ProteomicsDB" id="24097"/>
<dbReference type="ProteomicsDB" id="74294">
    <molecule id="Q8TDJ6-1"/>
</dbReference>
<dbReference type="ProteomicsDB" id="74295">
    <molecule id="Q8TDJ6-2"/>
</dbReference>
<dbReference type="Pumba" id="Q8TDJ6"/>
<dbReference type="Antibodypedia" id="51332">
    <property type="antibodies" value="53 antibodies from 15 providers"/>
</dbReference>
<dbReference type="DNASU" id="23312"/>
<dbReference type="Ensembl" id="ENST00000251076.9">
    <molecule id="Q8TDJ6-1"/>
    <property type="protein sequence ID" value="ENSP00000251076.5"/>
    <property type="gene ID" value="ENSG00000104093.14"/>
</dbReference>
<dbReference type="Ensembl" id="ENST00000449909.7">
    <molecule id="Q8TDJ6-2"/>
    <property type="protein sequence ID" value="ENSP00000400855.3"/>
    <property type="gene ID" value="ENSG00000104093.14"/>
</dbReference>
<dbReference type="Ensembl" id="ENST00000543779.6">
    <molecule id="Q8TDJ6-3"/>
    <property type="protein sequence ID" value="ENSP00000441858.2"/>
    <property type="gene ID" value="ENSG00000104093.14"/>
</dbReference>
<dbReference type="GeneID" id="23312"/>
<dbReference type="KEGG" id="hsa:23312"/>
<dbReference type="UCSC" id="uc002abf.4">
    <molecule id="Q8TDJ6-1"/>
    <property type="organism name" value="human"/>
</dbReference>
<dbReference type="AGR" id="HGNC:2938"/>
<dbReference type="CTD" id="23312"/>
<dbReference type="DisGeNET" id="23312"/>
<dbReference type="GeneCards" id="DMXL2"/>
<dbReference type="HGNC" id="HGNC:2938">
    <property type="gene designation" value="DMXL2"/>
</dbReference>
<dbReference type="HPA" id="ENSG00000104093">
    <property type="expression patterns" value="Low tissue specificity"/>
</dbReference>
<dbReference type="MalaCards" id="DMXL2"/>
<dbReference type="MIM" id="612186">
    <property type="type" value="gene"/>
</dbReference>
<dbReference type="MIM" id="616113">
    <property type="type" value="phenotype"/>
</dbReference>
<dbReference type="MIM" id="617605">
    <property type="type" value="phenotype"/>
</dbReference>
<dbReference type="MIM" id="618663">
    <property type="type" value="phenotype"/>
</dbReference>
<dbReference type="neXtProt" id="NX_Q8TDJ6"/>
<dbReference type="OpenTargets" id="ENSG00000104093"/>
<dbReference type="Orphanet" id="1934">
    <property type="disease" value="Early infantile developmental and epileptic encephalopathy"/>
</dbReference>
<dbReference type="Orphanet" id="453533">
    <property type="disease" value="Polyendocrine-polyneuropathy syndrome"/>
</dbReference>
<dbReference type="Orphanet" id="90635">
    <property type="disease" value="Rare autosomal dominant non-syndromic sensorineural deafness type DFNA"/>
</dbReference>
<dbReference type="PharmGKB" id="PA27392"/>
<dbReference type="VEuPathDB" id="HostDB:ENSG00000104093"/>
<dbReference type="eggNOG" id="KOG1064">
    <property type="taxonomic scope" value="Eukaryota"/>
</dbReference>
<dbReference type="GeneTree" id="ENSGT00390000000096"/>
<dbReference type="HOGENOM" id="CLU_000267_0_0_1"/>
<dbReference type="InParanoid" id="Q8TDJ6"/>
<dbReference type="OrthoDB" id="342131at2759"/>
<dbReference type="PAN-GO" id="Q8TDJ6">
    <property type="GO annotations" value="2 GO annotations based on evolutionary models"/>
</dbReference>
<dbReference type="PhylomeDB" id="Q8TDJ6"/>
<dbReference type="TreeFam" id="TF312896"/>
<dbReference type="PathwayCommons" id="Q8TDJ6"/>
<dbReference type="SignaLink" id="Q8TDJ6"/>
<dbReference type="SIGNOR" id="Q8TDJ6"/>
<dbReference type="BioGRID-ORCS" id="23312">
    <property type="hits" value="17 hits in 1156 CRISPR screens"/>
</dbReference>
<dbReference type="CD-CODE" id="FB4E32DD">
    <property type="entry name" value="Presynaptic clusters and postsynaptic densities"/>
</dbReference>
<dbReference type="ChiTaRS" id="DMXL2">
    <property type="organism name" value="human"/>
</dbReference>
<dbReference type="GenomeRNAi" id="23312"/>
<dbReference type="Pharos" id="Q8TDJ6">
    <property type="development level" value="Tbio"/>
</dbReference>
<dbReference type="PRO" id="PR:Q8TDJ6"/>
<dbReference type="Proteomes" id="UP000005640">
    <property type="component" value="Chromosome 15"/>
</dbReference>
<dbReference type="RNAct" id="Q8TDJ6">
    <property type="molecule type" value="protein"/>
</dbReference>
<dbReference type="Bgee" id="ENSG00000104093">
    <property type="expression patterns" value="Expressed in monocyte and 185 other cell types or tissues"/>
</dbReference>
<dbReference type="ExpressionAtlas" id="Q8TDJ6">
    <property type="expression patterns" value="baseline and differential"/>
</dbReference>
<dbReference type="GO" id="GO:0005615">
    <property type="term" value="C:extracellular space"/>
    <property type="evidence" value="ECO:0007005"/>
    <property type="project" value="UniProtKB"/>
</dbReference>
<dbReference type="GO" id="GO:0098992">
    <property type="term" value="C:neuronal dense core vesicle"/>
    <property type="evidence" value="ECO:0007669"/>
    <property type="project" value="UniProtKB-SubCell"/>
</dbReference>
<dbReference type="GO" id="GO:0043291">
    <property type="term" value="C:RAVE complex"/>
    <property type="evidence" value="ECO:0000318"/>
    <property type="project" value="GO_Central"/>
</dbReference>
<dbReference type="GO" id="GO:0008021">
    <property type="term" value="C:synaptic vesicle"/>
    <property type="evidence" value="ECO:0000314"/>
    <property type="project" value="MGI"/>
</dbReference>
<dbReference type="GO" id="GO:0030672">
    <property type="term" value="C:synaptic vesicle membrane"/>
    <property type="evidence" value="ECO:0007669"/>
    <property type="project" value="UniProtKB-SubCell"/>
</dbReference>
<dbReference type="GO" id="GO:0031267">
    <property type="term" value="F:small GTPase binding"/>
    <property type="evidence" value="ECO:0000314"/>
    <property type="project" value="MGI"/>
</dbReference>
<dbReference type="GO" id="GO:0007035">
    <property type="term" value="P:vacuolar acidification"/>
    <property type="evidence" value="ECO:0000318"/>
    <property type="project" value="GO_Central"/>
</dbReference>
<dbReference type="FunFam" id="2.130.10.10:FF:000621">
    <property type="entry name" value="Dmx like 2"/>
    <property type="match status" value="1"/>
</dbReference>
<dbReference type="FunFam" id="2.130.10.10:FF:003548">
    <property type="entry name" value="Dmx-like 2"/>
    <property type="match status" value="1"/>
</dbReference>
<dbReference type="FunFam" id="2.130.10.10:FF:000150">
    <property type="entry name" value="Dmx-like 2, isoform CRA_c"/>
    <property type="match status" value="1"/>
</dbReference>
<dbReference type="Gene3D" id="2.130.10.10">
    <property type="entry name" value="YVTN repeat-like/Quinoprotein amine dehydrogenase"/>
    <property type="match status" value="3"/>
</dbReference>
<dbReference type="InterPro" id="IPR052208">
    <property type="entry name" value="DmX-like/RAVE_component"/>
</dbReference>
<dbReference type="InterPro" id="IPR022033">
    <property type="entry name" value="Rav1p_C"/>
</dbReference>
<dbReference type="InterPro" id="IPR015943">
    <property type="entry name" value="WD40/YVTN_repeat-like_dom_sf"/>
</dbReference>
<dbReference type="InterPro" id="IPR036322">
    <property type="entry name" value="WD40_repeat_dom_sf"/>
</dbReference>
<dbReference type="InterPro" id="IPR001680">
    <property type="entry name" value="WD40_rpt"/>
</dbReference>
<dbReference type="PANTHER" id="PTHR13950:SF13">
    <property type="entry name" value="DMX-LIKE PROTEIN 2"/>
    <property type="match status" value="1"/>
</dbReference>
<dbReference type="PANTHER" id="PTHR13950">
    <property type="entry name" value="RABCONNECTIN-RELATED"/>
    <property type="match status" value="1"/>
</dbReference>
<dbReference type="Pfam" id="PF12234">
    <property type="entry name" value="Rav1p_C"/>
    <property type="match status" value="2"/>
</dbReference>
<dbReference type="Pfam" id="PF00400">
    <property type="entry name" value="WD40"/>
    <property type="match status" value="2"/>
</dbReference>
<dbReference type="SMART" id="SM00320">
    <property type="entry name" value="WD40"/>
    <property type="match status" value="13"/>
</dbReference>
<dbReference type="SUPFAM" id="SSF50978">
    <property type="entry name" value="WD40 repeat-like"/>
    <property type="match status" value="2"/>
</dbReference>
<dbReference type="PROSITE" id="PS50082">
    <property type="entry name" value="WD_REPEATS_2"/>
    <property type="match status" value="2"/>
</dbReference>
<dbReference type="PROSITE" id="PS50294">
    <property type="entry name" value="WD_REPEATS_REGION"/>
    <property type="match status" value="1"/>
</dbReference>
<comment type="function">
    <text evidence="1 5">May serve as a scaffold protein for MADD and RAB3GA on synaptic vesicles (PubMed:11809763). Plays a role in the brain as a key controller of neuronal and endocrine homeostatic processes (By similarity).</text>
</comment>
<comment type="subunit">
    <text evidence="5">Interacts with MADD and RAB3GAP.</text>
</comment>
<comment type="subcellular location">
    <subcellularLocation>
        <location evidence="5">Cytoplasmic vesicle</location>
        <location evidence="5">Secretory vesicle</location>
        <location evidence="5">Synaptic vesicle membrane</location>
        <topology evidence="5">Peripheral membrane protein</topology>
    </subcellularLocation>
    <subcellularLocation>
        <location evidence="1">Cytoplasmic vesicle</location>
        <location evidence="1">Secretory vesicle</location>
        <location evidence="1">Neuronal dense core vesicle</location>
    </subcellularLocation>
    <text evidence="1">The external layer of the inferior boundary for the hypothalamus part of the human brain (the so called median eminence (ME)) displayed a punctate pattern of expression; expression also observed in the cell bodies lining the third ventricle, in the long processes extending from these cell bodies toward the external layer of the ME, in small clear vesicles, and in large dense core vesicles.</text>
</comment>
<comment type="alternative products">
    <event type="alternative splicing"/>
    <isoform>
        <id>Q8TDJ6-1</id>
        <name>1</name>
        <sequence type="displayed"/>
    </isoform>
    <isoform>
        <id>Q8TDJ6-2</id>
        <name>2</name>
        <sequence type="described" ref="VSP_043015"/>
    </isoform>
    <isoform>
        <id>Q8TDJ6-3</id>
        <name>3</name>
        <sequence type="described" ref="VSP_044977"/>
    </isoform>
</comment>
<comment type="disease" evidence="7">
    <disease id="DI-04291">
        <name>Polyendocrine-polyneuropathy syndrome</name>
        <acronym>PEPNS</acronym>
        <description>A progressive endocrine and neurodevelopmental disorder manifesting early in childhood with growth retardation and recurrent episodes of profound asymptomatic hypoglycemia. PEPNS is characterized by central hypothyroidism, hypogonadotropic hypogonadism, incomplete puberty, progressive non-autoimmune insulin-dependent diabetes mellitus, peripheral demyelinating sensorimotor polyneuropathy, and cerebellar and pyramidal signs.</description>
        <dbReference type="MIM" id="616113"/>
    </disease>
    <text>The disease is caused by variants affecting the gene represented in this entry.</text>
</comment>
<comment type="disease" evidence="8">
    <disease id="DI-05058">
        <name>Deafness, autosomal dominant, 71</name>
        <acronym>DFNA71</acronym>
        <description>A form of non-syndromic sensorineural hearing loss. Sensorineural deafness results from damage to the neural receptors of the inner ear, the nerve pathways to the brain, or the area of the brain that receives sound information. DFNA71 is characterized by bilateral mild to moderate hearing loss before age 20 years, which gradually progresses to severe to profound hearing loss.</description>
        <dbReference type="MIM" id="617605"/>
    </disease>
    <text>The disease is caused by variants affecting the gene represented in this entry.</text>
</comment>
<comment type="disease" evidence="9 10">
    <disease id="DI-05696">
        <name>Developmental and epileptic encephalopathy 81</name>
        <acronym>DEE81</acronym>
        <description>A form of epileptic encephalopathy, a heterogeneous group of severe early-onset epilepsies characterized by refractory seizures, neurodevelopmental impairment, and poor prognosis. Development is normal prior to seizure onset, after which cognitive and motor delays become apparent. DEE81 is an autosomal recessive form characterized by onset soon after birth, little developmental progress with no eye contact and no motor or cognitive development. Other features may include facial dysmorphism, such as hypotonic facies and epicanthal folds, as well as sensorineural hearing loss and peripheral neuropathy.</description>
        <dbReference type="MIM" id="618663"/>
    </disease>
    <text>The disease is caused by variants affecting the gene represented in this entry.</text>
</comment>
<name>DMXL2_HUMAN</name>
<feature type="chain" id="PRO_0000223324" description="DmX-like protein 2">
    <location>
        <begin position="1"/>
        <end position="3036"/>
    </location>
</feature>
<feature type="repeat" description="WD 1">
    <location>
        <begin position="108"/>
        <end position="145"/>
    </location>
</feature>
<feature type="repeat" description="WD 2">
    <location>
        <begin position="167"/>
        <end position="207"/>
    </location>
</feature>
<feature type="repeat" description="WD 3">
    <location>
        <begin position="230"/>
        <end position="278"/>
    </location>
</feature>
<feature type="repeat" description="WD 4">
    <location>
        <begin position="492"/>
        <end position="532"/>
    </location>
</feature>
<feature type="repeat" description="WD 5">
    <location>
        <begin position="595"/>
        <end position="634"/>
    </location>
</feature>
<feature type="repeat" description="WD 6">
    <location>
        <begin position="751"/>
        <end position="803"/>
    </location>
</feature>
<feature type="repeat" description="WD 7">
    <location>
        <begin position="878"/>
        <end position="920"/>
    </location>
</feature>
<feature type="repeat" description="WD 8">
    <location>
        <begin position="1000"/>
        <end position="1037"/>
    </location>
</feature>
<feature type="repeat" description="WD 9">
    <location>
        <begin position="1163"/>
        <end position="1204"/>
    </location>
</feature>
<feature type="repeat" description="WD 10">
    <location>
        <begin position="1244"/>
        <end position="1281"/>
    </location>
</feature>
<feature type="repeat" description="WD 11">
    <location>
        <begin position="2761"/>
        <end position="2800"/>
    </location>
</feature>
<feature type="repeat" description="WD 12">
    <location>
        <begin position="2804"/>
        <end position="2843"/>
    </location>
</feature>
<feature type="repeat" description="WD 13">
    <location>
        <begin position="2850"/>
        <end position="2892"/>
    </location>
</feature>
<feature type="repeat" description="WD 14">
    <location>
        <begin position="2898"/>
        <end position="2937"/>
    </location>
</feature>
<feature type="repeat" description="WD 15">
    <location>
        <begin position="2940"/>
        <end position="2979"/>
    </location>
</feature>
<feature type="repeat" description="WD 16">
    <location>
        <begin position="2992"/>
        <end position="3030"/>
    </location>
</feature>
<feature type="region of interest" description="Disordered" evidence="3">
    <location>
        <begin position="417"/>
        <end position="480"/>
    </location>
</feature>
<feature type="region of interest" description="Disordered" evidence="3">
    <location>
        <begin position="932"/>
        <end position="959"/>
    </location>
</feature>
<feature type="region of interest" description="Disordered" evidence="3">
    <location>
        <begin position="1927"/>
        <end position="1952"/>
    </location>
</feature>
<feature type="region of interest" description="Disordered" evidence="3">
    <location>
        <begin position="1999"/>
        <end position="2033"/>
    </location>
</feature>
<feature type="coiled-coil region" evidence="2">
    <location>
        <begin position="2122"/>
        <end position="2153"/>
    </location>
</feature>
<feature type="compositionally biased region" description="Acidic residues" evidence="3">
    <location>
        <begin position="422"/>
        <end position="434"/>
    </location>
</feature>
<feature type="compositionally biased region" description="Basic and acidic residues" evidence="3">
    <location>
        <begin position="435"/>
        <end position="473"/>
    </location>
</feature>
<feature type="compositionally biased region" description="Low complexity" evidence="3">
    <location>
        <begin position="949"/>
        <end position="959"/>
    </location>
</feature>
<feature type="compositionally biased region" description="Basic and acidic residues" evidence="3">
    <location>
        <begin position="1927"/>
        <end position="1936"/>
    </location>
</feature>
<feature type="compositionally biased region" description="Basic and acidic residues" evidence="3">
    <location>
        <begin position="2001"/>
        <end position="2014"/>
    </location>
</feature>
<feature type="compositionally biased region" description="Acidic residues" evidence="3">
    <location>
        <begin position="2024"/>
        <end position="2033"/>
    </location>
</feature>
<feature type="modified residue" description="Phosphoserine" evidence="1">
    <location>
        <position position="326"/>
    </location>
</feature>
<feature type="modified residue" description="Phosphoserine" evidence="18">
    <location>
        <position position="473"/>
    </location>
</feature>
<feature type="modified residue" description="Phosphoserine" evidence="1">
    <location>
        <position position="588"/>
    </location>
</feature>
<feature type="modified residue" description="Phosphoserine" evidence="14 16">
    <location>
        <position position="944"/>
    </location>
</feature>
<feature type="modified residue" description="Phosphoserine" evidence="14 16">
    <location>
        <position position="945"/>
    </location>
</feature>
<feature type="modified residue" description="Phosphoserine" evidence="16">
    <location>
        <position position="1140"/>
    </location>
</feature>
<feature type="modified residue" description="Phosphoserine" evidence="16">
    <location>
        <position position="1143"/>
    </location>
</feature>
<feature type="modified residue" description="Phosphoserine" evidence="18">
    <location>
        <position position="1151"/>
    </location>
</feature>
<feature type="modified residue" description="Phosphoserine" evidence="1">
    <location>
        <position position="1287"/>
    </location>
</feature>
<feature type="modified residue" description="Phosphoserine" evidence="14">
    <location>
        <position position="1400"/>
    </location>
</feature>
<feature type="modified residue" description="Phosphothreonine" evidence="1">
    <location>
        <position position="1417"/>
    </location>
</feature>
<feature type="modified residue" description="Phosphoserine" evidence="14 15 17 18">
    <location>
        <position position="1857"/>
    </location>
</feature>
<feature type="modified residue" description="Phosphoserine" evidence="16">
    <location>
        <position position="1984"/>
    </location>
</feature>
<feature type="modified residue" description="Phosphothreonine" evidence="1">
    <location>
        <position position="2022"/>
    </location>
</feature>
<feature type="modified residue" description="Phosphoserine" evidence="18">
    <location>
        <position position="2399"/>
    </location>
</feature>
<feature type="modified residue" description="Phosphoserine" evidence="1">
    <location>
        <position position="2640"/>
    </location>
</feature>
<feature type="splice variant" id="VSP_043015" description="In isoform 2." evidence="12">
    <location>
        <begin position="922"/>
        <end position="1557"/>
    </location>
</feature>
<feature type="splice variant" id="VSP_044977" description="In isoform 3." evidence="11 12">
    <original>S</original>
    <variation>SS</variation>
    <location>
        <position position="2278"/>
    </location>
</feature>
<feature type="sequence variant" id="VAR_062094" description="In dbSNP:rs35097381.">
    <original>E</original>
    <variation>Q</variation>
    <location>
        <position position="144"/>
    </location>
</feature>
<feature type="sequence variant" id="VAR_057593" description="In dbSNP:rs17524906.">
    <original>T</original>
    <variation>M</variation>
    <location>
        <position position="497"/>
    </location>
</feature>
<feature type="sequence variant" id="VAR_057594" description="In dbSNP:rs16953073.">
    <original>N</original>
    <variation>D</variation>
    <location>
        <position position="903"/>
    </location>
</feature>
<feature type="sequence variant" id="VAR_057595" description="In dbSNP:rs12102203." evidence="4 6">
    <original>S</original>
    <variation>P</variation>
    <location>
        <position position="1288"/>
    </location>
</feature>
<feature type="sequence variant" id="VAR_057596" description="In dbSNP:rs35349640.">
    <original>D</original>
    <variation>G</variation>
    <location>
        <position position="1481"/>
    </location>
</feature>
<feature type="sequence variant" id="VAR_083446" description="In DEE81." evidence="10">
    <location>
        <begin position="1493"/>
        <end position="3036"/>
    </location>
</feature>
<feature type="sequence variant" id="VAR_069028" description="In dbSNP:rs149028181." evidence="6">
    <original>N</original>
    <variation>S</variation>
    <location>
        <position position="1698"/>
    </location>
</feature>
<feature type="sequence variant" id="VAR_083447" description="In DEE81; dbSNP:rs372749193." evidence="10">
    <original>A</original>
    <variation>V</variation>
    <location>
        <position position="1712"/>
    </location>
</feature>
<feature type="sequence variant" id="VAR_072642" description="In PEPNS." evidence="7">
    <location>
        <begin position="1942"/>
        <end position="1946"/>
    </location>
</feature>
<feature type="sequence variant" id="VAR_079484" description="In DFNA71." evidence="8">
    <original>R</original>
    <variation>H</variation>
    <location>
        <position position="2417"/>
    </location>
</feature>
<feature type="sequence conflict" description="In Ref. 1; AAL93215." evidence="13" ref="1">
    <original>A</original>
    <variation>T</variation>
    <location>
        <position position="128"/>
    </location>
</feature>
<feature type="sequence conflict" description="In Ref. 1; AAL93215." evidence="13" ref="1">
    <original>S</original>
    <variation>F</variation>
    <location>
        <position position="974"/>
    </location>
</feature>
<feature type="sequence conflict" description="In Ref. 1; AAL93215." evidence="13" ref="1">
    <original>H</original>
    <variation>Y</variation>
    <location>
        <position position="2984"/>
    </location>
</feature>
<protein>
    <recommendedName>
        <fullName>DmX-like protein 2</fullName>
    </recommendedName>
    <alternativeName>
        <fullName>Rabconnectin-3</fullName>
    </alternativeName>
</protein>
<proteinExistence type="evidence at protein level"/>
<gene>
    <name type="primary">DMXL2</name>
    <name type="synonym">KIAA0856</name>
</gene>
<evidence type="ECO:0000250" key="1">
    <source>
        <dbReference type="UniProtKB" id="Q8BPN8"/>
    </source>
</evidence>
<evidence type="ECO:0000255" key="2"/>
<evidence type="ECO:0000256" key="3">
    <source>
        <dbReference type="SAM" id="MobiDB-lite"/>
    </source>
</evidence>
<evidence type="ECO:0000269" key="4">
    <source>
    </source>
</evidence>
<evidence type="ECO:0000269" key="5">
    <source>
    </source>
</evidence>
<evidence type="ECO:0000269" key="6">
    <source>
    </source>
</evidence>
<evidence type="ECO:0000269" key="7">
    <source>
    </source>
</evidence>
<evidence type="ECO:0000269" key="8">
    <source>
    </source>
</evidence>
<evidence type="ECO:0000269" key="9">
    <source>
    </source>
</evidence>
<evidence type="ECO:0000269" key="10">
    <source>
    </source>
</evidence>
<evidence type="ECO:0000303" key="11">
    <source>
    </source>
</evidence>
<evidence type="ECO:0000303" key="12">
    <source>
    </source>
</evidence>
<evidence type="ECO:0000305" key="13"/>
<evidence type="ECO:0007744" key="14">
    <source>
    </source>
</evidence>
<evidence type="ECO:0007744" key="15">
    <source>
    </source>
</evidence>
<evidence type="ECO:0007744" key="16">
    <source>
    </source>
</evidence>
<evidence type="ECO:0007744" key="17">
    <source>
    </source>
</evidence>
<evidence type="ECO:0007744" key="18">
    <source>
    </source>
</evidence>
<accession>Q8TDJ6</accession>
<accession>B2RTR3</accession>
<accession>B7ZMH3</accession>
<accession>F5GWF1</accession>
<accession>O94938</accession>
<organism>
    <name type="scientific">Homo sapiens</name>
    <name type="common">Human</name>
    <dbReference type="NCBI Taxonomy" id="9606"/>
    <lineage>
        <taxon>Eukaryota</taxon>
        <taxon>Metazoa</taxon>
        <taxon>Chordata</taxon>
        <taxon>Craniata</taxon>
        <taxon>Vertebrata</taxon>
        <taxon>Euteleostomi</taxon>
        <taxon>Mammalia</taxon>
        <taxon>Eutheria</taxon>
        <taxon>Euarchontoglires</taxon>
        <taxon>Primates</taxon>
        <taxon>Haplorrhini</taxon>
        <taxon>Catarrhini</taxon>
        <taxon>Hominidae</taxon>
        <taxon>Homo</taxon>
    </lineage>
</organism>